<keyword id="KW-0413">Isomerase</keyword>
<keyword id="KW-0819">tRNA processing</keyword>
<proteinExistence type="inferred from homology"/>
<comment type="function">
    <text evidence="1">Formation of pseudouridine at positions 38, 39 and 40 in the anticodon stem and loop of transfer RNAs.</text>
</comment>
<comment type="catalytic activity">
    <reaction evidence="1">
        <text>uridine(38/39/40) in tRNA = pseudouridine(38/39/40) in tRNA</text>
        <dbReference type="Rhea" id="RHEA:22376"/>
        <dbReference type="Rhea" id="RHEA-COMP:10085"/>
        <dbReference type="Rhea" id="RHEA-COMP:10087"/>
        <dbReference type="ChEBI" id="CHEBI:65314"/>
        <dbReference type="ChEBI" id="CHEBI:65315"/>
        <dbReference type="EC" id="5.4.99.12"/>
    </reaction>
</comment>
<comment type="subunit">
    <text evidence="1">Homodimer.</text>
</comment>
<comment type="similarity">
    <text evidence="1">Belongs to the tRNA pseudouridine synthase TruA family.</text>
</comment>
<sequence>MSGQQSSPVYKIALGIEYDGSKYYGWQRQNEVRSVQEKLEKALSQVANEPINVFCAGRTDAGVHGTGQVVHFETTALRKDAAWTLGVNANLPGDIAVRWVKTVPDDFHARFSATARRYRYIIYNHRLRPAVLAKGVTHYYEPLDAERMHRAAQCLLGENDFTSFRAVQCQSRTPWRNVMHINVTRHGPYVVVDIKANAFVHHMVRNIVGSLLEVGAHNQPESWIAELLAARDRTLAAATAKAEGLYLVAVDYPDRFDLPKPPMGPLFLAD</sequence>
<gene>
    <name evidence="1" type="primary">truA</name>
    <name type="ordered locus">SeHA_C2610</name>
</gene>
<protein>
    <recommendedName>
        <fullName evidence="1">tRNA pseudouridine synthase A</fullName>
        <ecNumber evidence="1">5.4.99.12</ecNumber>
    </recommendedName>
    <alternativeName>
        <fullName evidence="1">tRNA pseudouridine(38-40) synthase</fullName>
    </alternativeName>
    <alternativeName>
        <fullName evidence="1">tRNA pseudouridylate synthase I</fullName>
    </alternativeName>
    <alternativeName>
        <fullName evidence="1">tRNA-uridine isomerase I</fullName>
    </alternativeName>
</protein>
<reference key="1">
    <citation type="journal article" date="2011" name="J. Bacteriol.">
        <title>Comparative genomics of 28 Salmonella enterica isolates: evidence for CRISPR-mediated adaptive sublineage evolution.</title>
        <authorList>
            <person name="Fricke W.F."/>
            <person name="Mammel M.K."/>
            <person name="McDermott P.F."/>
            <person name="Tartera C."/>
            <person name="White D.G."/>
            <person name="Leclerc J.E."/>
            <person name="Ravel J."/>
            <person name="Cebula T.A."/>
        </authorList>
    </citation>
    <scope>NUCLEOTIDE SEQUENCE [LARGE SCALE GENOMIC DNA]</scope>
    <source>
        <strain>SL476</strain>
    </source>
</reference>
<dbReference type="EC" id="5.4.99.12" evidence="1"/>
<dbReference type="EMBL" id="CP001120">
    <property type="protein sequence ID" value="ACF68757.1"/>
    <property type="molecule type" value="Genomic_DNA"/>
</dbReference>
<dbReference type="RefSeq" id="WP_000016631.1">
    <property type="nucleotide sequence ID" value="NC_011083.1"/>
</dbReference>
<dbReference type="SMR" id="B4TBN7"/>
<dbReference type="KEGG" id="seh:SeHA_C2610"/>
<dbReference type="HOGENOM" id="CLU_014673_0_2_6"/>
<dbReference type="Proteomes" id="UP000001866">
    <property type="component" value="Chromosome"/>
</dbReference>
<dbReference type="GO" id="GO:0003723">
    <property type="term" value="F:RNA binding"/>
    <property type="evidence" value="ECO:0007669"/>
    <property type="project" value="InterPro"/>
</dbReference>
<dbReference type="GO" id="GO:0160147">
    <property type="term" value="F:tRNA pseudouridine(38-40) synthase activity"/>
    <property type="evidence" value="ECO:0007669"/>
    <property type="project" value="UniProtKB-EC"/>
</dbReference>
<dbReference type="GO" id="GO:0031119">
    <property type="term" value="P:tRNA pseudouridine synthesis"/>
    <property type="evidence" value="ECO:0007669"/>
    <property type="project" value="UniProtKB-UniRule"/>
</dbReference>
<dbReference type="CDD" id="cd02570">
    <property type="entry name" value="PseudoU_synth_EcTruA"/>
    <property type="match status" value="1"/>
</dbReference>
<dbReference type="FunFam" id="3.30.70.580:FF:000001">
    <property type="entry name" value="tRNA pseudouridine synthase A"/>
    <property type="match status" value="1"/>
</dbReference>
<dbReference type="FunFam" id="3.30.70.660:FF:000001">
    <property type="entry name" value="tRNA pseudouridine synthase A"/>
    <property type="match status" value="1"/>
</dbReference>
<dbReference type="Gene3D" id="3.30.70.660">
    <property type="entry name" value="Pseudouridine synthase I, catalytic domain, C-terminal subdomain"/>
    <property type="match status" value="1"/>
</dbReference>
<dbReference type="Gene3D" id="3.30.70.580">
    <property type="entry name" value="Pseudouridine synthase I, catalytic domain, N-terminal subdomain"/>
    <property type="match status" value="1"/>
</dbReference>
<dbReference type="HAMAP" id="MF_00171">
    <property type="entry name" value="TruA"/>
    <property type="match status" value="1"/>
</dbReference>
<dbReference type="InterPro" id="IPR020103">
    <property type="entry name" value="PsdUridine_synth_cat_dom_sf"/>
</dbReference>
<dbReference type="InterPro" id="IPR001406">
    <property type="entry name" value="PsdUridine_synth_TruA"/>
</dbReference>
<dbReference type="InterPro" id="IPR020097">
    <property type="entry name" value="PsdUridine_synth_TruA_a/b_dom"/>
</dbReference>
<dbReference type="InterPro" id="IPR020095">
    <property type="entry name" value="PsdUridine_synth_TruA_C"/>
</dbReference>
<dbReference type="InterPro" id="IPR020094">
    <property type="entry name" value="TruA/RsuA/RluB/E/F_N"/>
</dbReference>
<dbReference type="NCBIfam" id="TIGR00071">
    <property type="entry name" value="hisT_truA"/>
    <property type="match status" value="1"/>
</dbReference>
<dbReference type="PANTHER" id="PTHR11142">
    <property type="entry name" value="PSEUDOURIDYLATE SYNTHASE"/>
    <property type="match status" value="1"/>
</dbReference>
<dbReference type="PANTHER" id="PTHR11142:SF0">
    <property type="entry name" value="TRNA PSEUDOURIDINE SYNTHASE-LIKE 1"/>
    <property type="match status" value="1"/>
</dbReference>
<dbReference type="Pfam" id="PF01416">
    <property type="entry name" value="PseudoU_synth_1"/>
    <property type="match status" value="2"/>
</dbReference>
<dbReference type="PIRSF" id="PIRSF001430">
    <property type="entry name" value="tRNA_psdUrid_synth"/>
    <property type="match status" value="1"/>
</dbReference>
<dbReference type="SUPFAM" id="SSF55120">
    <property type="entry name" value="Pseudouridine synthase"/>
    <property type="match status" value="1"/>
</dbReference>
<accession>B4TBN7</accession>
<evidence type="ECO:0000255" key="1">
    <source>
        <dbReference type="HAMAP-Rule" id="MF_00171"/>
    </source>
</evidence>
<name>TRUA_SALHS</name>
<organism>
    <name type="scientific">Salmonella heidelberg (strain SL476)</name>
    <dbReference type="NCBI Taxonomy" id="454169"/>
    <lineage>
        <taxon>Bacteria</taxon>
        <taxon>Pseudomonadati</taxon>
        <taxon>Pseudomonadota</taxon>
        <taxon>Gammaproteobacteria</taxon>
        <taxon>Enterobacterales</taxon>
        <taxon>Enterobacteriaceae</taxon>
        <taxon>Salmonella</taxon>
    </lineage>
</organism>
<feature type="chain" id="PRO_1000097781" description="tRNA pseudouridine synthase A">
    <location>
        <begin position="1"/>
        <end position="270"/>
    </location>
</feature>
<feature type="active site" description="Nucleophile" evidence="1">
    <location>
        <position position="60"/>
    </location>
</feature>
<feature type="binding site" evidence="1">
    <location>
        <position position="118"/>
    </location>
    <ligand>
        <name>substrate</name>
    </ligand>
</feature>